<sequence length="311" mass="35460">MSQNQEISKKEQYNLNKLQKRLRRNVGEAIADFNMIEEGDRIMVCLSGGKDSYTMLEILRNLQQSAPINFSLVAVNLDQKQPGFPEHVLPEYLEKLGVEYKIVEENTYGIVKEKIPEGKTTCSLCSRLRRGILYRTATELGATKIALGHHRDDILQTLFLNMFYGGKMKGMPPKLMSDDGKHIVIRPLAYCREKDIQRFADAKAFPIIPCNLCGSQPNLQRQVIADMLRDWDKRYPGRIETMFSAMQNVVPSHLCDTNLFDFKGITHGSEVVNGGDLAFDREEIPLQPAGWQPEEDENQLDELRLNVVEVK</sequence>
<proteinExistence type="inferred from homology"/>
<reference key="1">
    <citation type="submission" date="2008-02" db="EMBL/GenBank/DDBJ databases">
        <title>Complete sequence of Escherichia coli C str. ATCC 8739.</title>
        <authorList>
            <person name="Copeland A."/>
            <person name="Lucas S."/>
            <person name="Lapidus A."/>
            <person name="Glavina del Rio T."/>
            <person name="Dalin E."/>
            <person name="Tice H."/>
            <person name="Bruce D."/>
            <person name="Goodwin L."/>
            <person name="Pitluck S."/>
            <person name="Kiss H."/>
            <person name="Brettin T."/>
            <person name="Detter J.C."/>
            <person name="Han C."/>
            <person name="Kuske C.R."/>
            <person name="Schmutz J."/>
            <person name="Larimer F."/>
            <person name="Land M."/>
            <person name="Hauser L."/>
            <person name="Kyrpides N."/>
            <person name="Mikhailova N."/>
            <person name="Ingram L."/>
            <person name="Richardson P."/>
        </authorList>
    </citation>
    <scope>NUCLEOTIDE SEQUENCE [LARGE SCALE GENOMIC DNA]</scope>
    <source>
        <strain>ATCC 8739 / DSM 1576 / NBRC 3972 / NCIMB 8545 / WDCM 00012 / Crooks</strain>
    </source>
</reference>
<gene>
    <name evidence="1" type="primary">ttcA</name>
    <name type="ordered locus">EcolC_2281</name>
</gene>
<feature type="chain" id="PRO_0000348717" description="tRNA-cytidine(32) 2-sulfurtransferase">
    <location>
        <begin position="1"/>
        <end position="311"/>
    </location>
</feature>
<feature type="short sequence motif" description="PP-loop motif" evidence="1">
    <location>
        <begin position="47"/>
        <end position="52"/>
    </location>
</feature>
<feature type="binding site" evidence="1">
    <location>
        <position position="122"/>
    </location>
    <ligand>
        <name>[4Fe-4S] cluster</name>
        <dbReference type="ChEBI" id="CHEBI:49883"/>
    </ligand>
</feature>
<feature type="binding site" evidence="1">
    <location>
        <position position="125"/>
    </location>
    <ligand>
        <name>[4Fe-4S] cluster</name>
        <dbReference type="ChEBI" id="CHEBI:49883"/>
    </ligand>
</feature>
<feature type="binding site" evidence="1">
    <location>
        <position position="213"/>
    </location>
    <ligand>
        <name>[4Fe-4S] cluster</name>
        <dbReference type="ChEBI" id="CHEBI:49883"/>
    </ligand>
</feature>
<dbReference type="EC" id="2.8.1.-" evidence="1"/>
<dbReference type="EMBL" id="CP000946">
    <property type="protein sequence ID" value="ACA77917.1"/>
    <property type="molecule type" value="Genomic_DNA"/>
</dbReference>
<dbReference type="RefSeq" id="WP_000081418.1">
    <property type="nucleotide sequence ID" value="NZ_MTFT01000016.1"/>
</dbReference>
<dbReference type="SMR" id="B1ISR7"/>
<dbReference type="GeneID" id="75171471"/>
<dbReference type="KEGG" id="ecl:EcolC_2281"/>
<dbReference type="HOGENOM" id="CLU_026481_0_0_6"/>
<dbReference type="GO" id="GO:0005737">
    <property type="term" value="C:cytoplasm"/>
    <property type="evidence" value="ECO:0007669"/>
    <property type="project" value="UniProtKB-SubCell"/>
</dbReference>
<dbReference type="GO" id="GO:0051539">
    <property type="term" value="F:4 iron, 4 sulfur cluster binding"/>
    <property type="evidence" value="ECO:0007669"/>
    <property type="project" value="UniProtKB-UniRule"/>
</dbReference>
<dbReference type="GO" id="GO:0005524">
    <property type="term" value="F:ATP binding"/>
    <property type="evidence" value="ECO:0007669"/>
    <property type="project" value="UniProtKB-UniRule"/>
</dbReference>
<dbReference type="GO" id="GO:0000287">
    <property type="term" value="F:magnesium ion binding"/>
    <property type="evidence" value="ECO:0007669"/>
    <property type="project" value="UniProtKB-UniRule"/>
</dbReference>
<dbReference type="GO" id="GO:0016783">
    <property type="term" value="F:sulfurtransferase activity"/>
    <property type="evidence" value="ECO:0007669"/>
    <property type="project" value="UniProtKB-UniRule"/>
</dbReference>
<dbReference type="GO" id="GO:0000049">
    <property type="term" value="F:tRNA binding"/>
    <property type="evidence" value="ECO:0007669"/>
    <property type="project" value="UniProtKB-KW"/>
</dbReference>
<dbReference type="GO" id="GO:0034227">
    <property type="term" value="P:tRNA thio-modification"/>
    <property type="evidence" value="ECO:0007669"/>
    <property type="project" value="UniProtKB-UniRule"/>
</dbReference>
<dbReference type="CDD" id="cd24138">
    <property type="entry name" value="TtcA-like"/>
    <property type="match status" value="1"/>
</dbReference>
<dbReference type="FunFam" id="3.40.50.620:FF:000046">
    <property type="entry name" value="tRNA-cytidine(32) 2-sulfurtransferase"/>
    <property type="match status" value="1"/>
</dbReference>
<dbReference type="Gene3D" id="3.40.50.620">
    <property type="entry name" value="HUPs"/>
    <property type="match status" value="1"/>
</dbReference>
<dbReference type="HAMAP" id="MF_01850">
    <property type="entry name" value="TtcA"/>
    <property type="match status" value="1"/>
</dbReference>
<dbReference type="InterPro" id="IPR014729">
    <property type="entry name" value="Rossmann-like_a/b/a_fold"/>
</dbReference>
<dbReference type="InterPro" id="IPR011063">
    <property type="entry name" value="TilS/TtcA_N"/>
</dbReference>
<dbReference type="InterPro" id="IPR012089">
    <property type="entry name" value="tRNA_Cyd_32_2_STrfase"/>
</dbReference>
<dbReference type="InterPro" id="IPR035107">
    <property type="entry name" value="tRNA_thiolation_TtcA_Ctu1"/>
</dbReference>
<dbReference type="NCBIfam" id="NF007972">
    <property type="entry name" value="PRK10696.1"/>
    <property type="match status" value="1"/>
</dbReference>
<dbReference type="PANTHER" id="PTHR43686:SF1">
    <property type="entry name" value="AMINOTRAN_5 DOMAIN-CONTAINING PROTEIN"/>
    <property type="match status" value="1"/>
</dbReference>
<dbReference type="PANTHER" id="PTHR43686">
    <property type="entry name" value="SULFURTRANSFERASE-RELATED"/>
    <property type="match status" value="1"/>
</dbReference>
<dbReference type="Pfam" id="PF01171">
    <property type="entry name" value="ATP_bind_3"/>
    <property type="match status" value="1"/>
</dbReference>
<dbReference type="PIRSF" id="PIRSF004976">
    <property type="entry name" value="ATPase_YdaO"/>
    <property type="match status" value="1"/>
</dbReference>
<dbReference type="SUPFAM" id="SSF52402">
    <property type="entry name" value="Adenine nucleotide alpha hydrolases-like"/>
    <property type="match status" value="1"/>
</dbReference>
<comment type="function">
    <text evidence="1">Catalyzes the ATP-dependent 2-thiolation of cytidine in position 32 of tRNA, to form 2-thiocytidine (s(2)C32). The sulfur atoms are provided by the cysteine/cysteine desulfurase (IscS) system.</text>
</comment>
<comment type="catalytic activity">
    <reaction evidence="1">
        <text>cytidine(32) in tRNA + S-sulfanyl-L-cysteinyl-[cysteine desulfurase] + AH2 + ATP = 2-thiocytidine(32) in tRNA + L-cysteinyl-[cysteine desulfurase] + A + AMP + diphosphate + H(+)</text>
        <dbReference type="Rhea" id="RHEA:57048"/>
        <dbReference type="Rhea" id="RHEA-COMP:10288"/>
        <dbReference type="Rhea" id="RHEA-COMP:12157"/>
        <dbReference type="Rhea" id="RHEA-COMP:12158"/>
        <dbReference type="Rhea" id="RHEA-COMP:14821"/>
        <dbReference type="ChEBI" id="CHEBI:13193"/>
        <dbReference type="ChEBI" id="CHEBI:15378"/>
        <dbReference type="ChEBI" id="CHEBI:17499"/>
        <dbReference type="ChEBI" id="CHEBI:29950"/>
        <dbReference type="ChEBI" id="CHEBI:30616"/>
        <dbReference type="ChEBI" id="CHEBI:33019"/>
        <dbReference type="ChEBI" id="CHEBI:61963"/>
        <dbReference type="ChEBI" id="CHEBI:82748"/>
        <dbReference type="ChEBI" id="CHEBI:141453"/>
        <dbReference type="ChEBI" id="CHEBI:456215"/>
    </reaction>
    <physiologicalReaction direction="left-to-right" evidence="1">
        <dbReference type="Rhea" id="RHEA:57049"/>
    </physiologicalReaction>
</comment>
<comment type="cofactor">
    <cofactor evidence="1">
        <name>Mg(2+)</name>
        <dbReference type="ChEBI" id="CHEBI:18420"/>
    </cofactor>
</comment>
<comment type="cofactor">
    <cofactor evidence="1">
        <name>[4Fe-4S] cluster</name>
        <dbReference type="ChEBI" id="CHEBI:49883"/>
    </cofactor>
    <text evidence="1">Binds 1 [4Fe-4S] cluster per subunit. The cluster is chelated by three Cys residues, the fourth Fe has a free coordination site that may bind a sulfur atom transferred from the persulfide of IscS.</text>
</comment>
<comment type="pathway">
    <text evidence="1">tRNA modification.</text>
</comment>
<comment type="subunit">
    <text evidence="1">Homodimer.</text>
</comment>
<comment type="subcellular location">
    <subcellularLocation>
        <location evidence="1">Cytoplasm</location>
    </subcellularLocation>
</comment>
<comment type="miscellaneous">
    <text evidence="1">The thiolation reaction likely consists of two steps: a first activation step by ATP to form an adenylated intermediate of the target base of tRNA, and a second nucleophilic substitution step of the sulfur (S) atom supplied by the hydrosulfide attached to the Fe-S cluster.</text>
</comment>
<comment type="similarity">
    <text evidence="1">Belongs to the TtcA family.</text>
</comment>
<evidence type="ECO:0000255" key="1">
    <source>
        <dbReference type="HAMAP-Rule" id="MF_01850"/>
    </source>
</evidence>
<accession>B1ISR7</accession>
<name>TTCA_ECOLC</name>
<protein>
    <recommendedName>
        <fullName evidence="1">tRNA-cytidine(32) 2-sulfurtransferase</fullName>
        <ecNumber evidence="1">2.8.1.-</ecNumber>
    </recommendedName>
    <alternativeName>
        <fullName evidence="1">Two-thiocytidine biosynthesis protein A</fullName>
    </alternativeName>
    <alternativeName>
        <fullName evidence="1">tRNA 2-thiocytidine biosynthesis protein TtcA</fullName>
    </alternativeName>
</protein>
<keyword id="KW-0004">4Fe-4S</keyword>
<keyword id="KW-0067">ATP-binding</keyword>
<keyword id="KW-0963">Cytoplasm</keyword>
<keyword id="KW-0408">Iron</keyword>
<keyword id="KW-0411">Iron-sulfur</keyword>
<keyword id="KW-0460">Magnesium</keyword>
<keyword id="KW-0479">Metal-binding</keyword>
<keyword id="KW-0547">Nucleotide-binding</keyword>
<keyword id="KW-0694">RNA-binding</keyword>
<keyword id="KW-0808">Transferase</keyword>
<keyword id="KW-0819">tRNA processing</keyword>
<keyword id="KW-0820">tRNA-binding</keyword>
<organism>
    <name type="scientific">Escherichia coli (strain ATCC 8739 / DSM 1576 / NBRC 3972 / NCIMB 8545 / WDCM 00012 / Crooks)</name>
    <dbReference type="NCBI Taxonomy" id="481805"/>
    <lineage>
        <taxon>Bacteria</taxon>
        <taxon>Pseudomonadati</taxon>
        <taxon>Pseudomonadota</taxon>
        <taxon>Gammaproteobacteria</taxon>
        <taxon>Enterobacterales</taxon>
        <taxon>Enterobacteriaceae</taxon>
        <taxon>Escherichia</taxon>
    </lineage>
</organism>